<name>LOVD_ASPTE</name>
<protein>
    <recommendedName>
        <fullName evidence="17">Monacolin J acid methylbutanoyltransferase</fullName>
        <ecNumber evidence="5 6 7">2.3.1.238</ecNumber>
    </recommendedName>
    <alternativeName>
        <fullName evidence="17">Lovastatin biosynthesis cluster protein D</fullName>
    </alternativeName>
    <alternativeName>
        <fullName>Lovastatin hydrolase</fullName>
    </alternativeName>
    <alternativeName>
        <fullName evidence="18">Simvastatin synthase LovD</fullName>
        <shortName evidence="18">SV synthase</shortName>
    </alternativeName>
</protein>
<feature type="chain" id="PRO_0000430100" description="Monacolin J acid methylbutanoyltransferase">
    <location>
        <begin position="1"/>
        <end position="413"/>
    </location>
</feature>
<feature type="active site" description="Acyl-ester intermediate" evidence="4 7">
    <location>
        <position position="76"/>
    </location>
</feature>
<feature type="binding site">
    <location>
        <position position="73"/>
    </location>
    <ligand>
        <name>monacolin J</name>
        <dbReference type="ChEBI" id="CHEBI:79034"/>
    </ligand>
</feature>
<feature type="binding site">
    <location>
        <position position="173"/>
    </location>
    <ligand>
        <name>monacolin J</name>
        <dbReference type="ChEBI" id="CHEBI:79034"/>
    </ligand>
</feature>
<feature type="binding site">
    <location>
        <position position="188"/>
    </location>
    <ligand>
        <name>monacolin J</name>
        <dbReference type="ChEBI" id="CHEBI:79034"/>
    </ligand>
</feature>
<feature type="binding site">
    <location>
        <position position="258"/>
    </location>
    <ligand>
        <name>monacolin J</name>
        <dbReference type="ChEBI" id="CHEBI:79034"/>
    </ligand>
</feature>
<feature type="binding site">
    <location>
        <position position="366"/>
    </location>
    <ligand>
        <name>2-methylbutanoate</name>
        <dbReference type="ChEBI" id="CHEBI:48946"/>
    </ligand>
</feature>
<feature type="binding site">
    <location>
        <position position="388"/>
    </location>
    <ligand>
        <name>monacolin J</name>
        <dbReference type="ChEBI" id="CHEBI:79034"/>
    </ligand>
</feature>
<feature type="binding site">
    <location>
        <position position="390"/>
    </location>
    <ligand>
        <name>monacolin J</name>
        <dbReference type="ChEBI" id="CHEBI:79034"/>
    </ligand>
</feature>
<feature type="mutagenesis site" description="Strongly increases simvastatin synthase activity upon overexpression in E.coli and abolishes activity with LovD-bound alpha-methylbutanoate; when associated with V-9; E-26; S-28; L-35; R-43; R-96; C-109; P-123; V-157; G-164; N-172; F-174; L-178; G-191; I-192; M-241; S-247; K-250; T-256; H-261; S-275; G-297; M-355; L-361; I-370; V-383; S-391 and K-404." evidence="13">
    <original>I</original>
    <variation>N</variation>
    <location>
        <position position="4"/>
    </location>
</feature>
<feature type="mutagenesis site" description="Strongly increases simvastatin synthase activity upon overexpression in E.coli and abolishes activity with LovD-bound alpha-methylbutanoate; when associated with N-4; E-26; S-28; L-35; R-43; R-96; C-109; P-123; V-157; G-164; N-172; F-174; L-178; G-191; I-192; M-241; S-247; K-250; T-256; H-261; S-275; G-297; M-355; L-361; I-370; V-383; S-391 and K-404." evidence="13">
    <original>A</original>
    <variation>V</variation>
    <location>
        <position position="9"/>
    </location>
</feature>
<feature type="mutagenesis site" description="Strongly increases simvastatin synthase activity upon overexpression in E.coli; when associated with E-26; A-40; N-60; V-86; Y-161; T-190; S-275 and F-334." evidence="7">
    <original>D</original>
    <variation>G</variation>
    <location>
        <position position="12"/>
    </location>
</feature>
<feature type="mutagenesis site" description="Strongly increases simvastatin synthase activity upon overexpression in E.coli and abolishes activity with LovD-bound alpha-methylbutanoate; when associated with N-4; V-9; S-28; L-35; R-43; R-96; C-109; P-123; V-157; G-164; N-172; F-174; L-178; G-191; I-192; M-241; S-247; K-250; T-256; H-261; S-275; G-297; M-355; L-361; I-370; V-383; S-391 and K-404." evidence="7 13">
    <original>K</original>
    <variation>E</variation>
    <location>
        <position position="26"/>
    </location>
</feature>
<feature type="mutagenesis site" description="Strongly increases simvastatin synthase activity upon overexpression in E.coli; when associated with G-12; A-40; N-60; V-86; Y-161; T-190; S-275 and F-334." evidence="7 13">
    <original>K</original>
    <variation>E</variation>
    <location>
        <position position="26"/>
    </location>
</feature>
<feature type="mutagenesis site" description="Strongly increases simvastatin synthase activity upon overexpression in E.coli and abolishes activity with LovD-bound alpha-methylbutanoate; when associated with N-4; V-9; E-26; L-35; R-43; R-96; C-109; P-123; V-157; G-164; N-172; F-174; L-178; G-191; I-192; M-241; S-247; K-250; T-256; H-261; S-275; G-297; M-355; L-361; I-370; V-383; S-391 and K-404." evidence="13">
    <original>R</original>
    <variation>S</variation>
    <location>
        <position position="28"/>
    </location>
</feature>
<feature type="mutagenesis site" description="Strongly increases simvastatin synthase activity upon overexpression in E.coli and abolishes activity with LovD-bound alpha-methylbutanoate; when associated with N-4; V-9; E-26; S-28; R-43; R-96; C-109; P-123; V-157; G-164; N-172; F-174; L-178; G-191; I-192; M-241; S-247; K-250; T-256; H-261; S-275; G-297; M-355; L-361; I-370; V-383; S-391 and K-404." evidence="13">
    <original>I</original>
    <variation>L</variation>
    <location>
        <position position="35"/>
    </location>
</feature>
<feature type="mutagenesis site" description="Improves protein solubility upon overexpression in E.coli. Strongly improves protein solubility; when associated with N-60. Strongly increases simvastatin synthase activity upon overexpression in E.coli; when associated with G-12; E-26; N-60; V-86; Y-161; T-190; S-275 and F-334." evidence="5">
    <original>C</original>
    <variation>A</variation>
    <location>
        <position position="40"/>
    </location>
</feature>
<feature type="mutagenesis site" description="Strongly increases simvastatin synthase activity upon overexpression in E.coli and abolishes activity with LovD-bound alpha-methylbutanoate; when associated with N-4; V-9; E-26; S-28; L-35; R-96; C-109; P-123; V-157; G-164; N-172; F-174; L-178; G-191; I-192; M-241; S-247; K-250; T-256; H-261; S-275; G-297; M-355; L-361; I-370; V-383; S-391 and K-404." evidence="13">
    <original>N</original>
    <variation>R</variation>
    <location>
        <position position="43"/>
    </location>
</feature>
<feature type="mutagenesis site" description="Minor effect on protein solubility upon overexpression in E.coli. Strongly improves protein solubility; when associated with A-40. Strongly increases simvastatin synthase activity upon overexpression in E.coli; when associated with G-12; E-26; A-40; V-86; Y-161; T-190; S-275 and F-334." evidence="5">
    <original>C</original>
    <variation>A</variation>
    <variation>N</variation>
    <location>
        <position position="60"/>
    </location>
</feature>
<feature type="mutagenesis site" description="Abolishes enzyme activity." evidence="4">
    <original>S</original>
    <variation>A</variation>
    <variation>N</variation>
    <location>
        <position position="76"/>
    </location>
</feature>
<feature type="mutagenesis site" description="Strongly increases simvastatin synthase activity upon overexpression in E.coli; when associated with G-12; E-26; A-40; N-60; Y-161; T-190; S-275 and F-334." evidence="7">
    <original>A</original>
    <variation>V</variation>
    <location>
        <position position="86"/>
    </location>
</feature>
<feature type="mutagenesis site" description="Strongly increases simvastatin synthase activity upon overexpression in E.coli and abolishes activity with LovD-bound alpha-methylbutanoate; when associated with N-4; V-9; E-26; S-28; L-35; R-43; C-109; P-123; V-157; G-164; N-172; F-174; L-178; G-191; I-192; M-241; S-247; K-250; T-256; H-261; S-275; G-297; M-355; L-361; I-370; V-383; S-391 and K-404." evidence="13">
    <original>D</original>
    <variation>R</variation>
    <location>
        <position position="96"/>
    </location>
</feature>
<feature type="mutagenesis site" description="Strongly increases simvastatin synthase activity upon overexpression in E.coli and abolishes activity with LovD-bound alpha-methylbutanoate; when associated with N-4; V-9; E-26; S-28; L-35; R-43; R-96;." evidence="13">
    <original>S</original>
    <variation>C</variation>
    <location>
        <position position="109"/>
    </location>
</feature>
<feature type="mutagenesis site" description="Strongly increases simvastatin synthase activity upon overexpression in E.coli and abolishes activity with LovD-bound alpha-methylbutanoate; when associated with N-4; V-9; E-26; S-28; L-35; R-43; R-96; C-109; V-157; G-164; N-172; F-174; L-178; G-191; I-192; M-241; S-247; K-250; T-256; H-261; S-275; G-297; M-355; L-361; I-370; V-383; S-391 and K-404." evidence="13">
    <original>A</original>
    <variation>P</variation>
    <location>
        <position position="123"/>
    </location>
</feature>
<feature type="mutagenesis site" description="Strongly increases simvastatin synthase activity upon overexpression in E.coli and abolishes activity with LovD-bound alpha-methylbutanoate; when associated with N-4; V-9; E-26; S-28; L-35; R-43; R-96; C-109; P-123; G-164; N-172; F-174; L-178; G-191; I-192; M-241; S-247; K-250; T-256; H-261; S-275; G-297; M-355; L-361; I-370; V-383; S-391 and K-404." evidence="13">
    <original>M</original>
    <variation>V</variation>
    <location>
        <position position="157"/>
    </location>
</feature>
<feature type="mutagenesis site" description="Strongly increases simvastatin synthase activity upon overexpression in E.coli; when associated with G-12; E-26; A-40; N-60; V-86; T-190; S-275 and F-334." evidence="7">
    <original>H</original>
    <variation>Y</variation>
    <location>
        <position position="161"/>
    </location>
</feature>
<feature type="mutagenesis site" description="Strongly increases simvastatin synthase activity upon overexpression in E.coli and abolishes activity with LovD-bound alpha-methylbutanoate; when associated with N-4; V-9; E-26; S-28; L-35; R-43; R-96; C-109; P-123; V-157; N-172; F-174; L-178; G-191; I-192; M-241; S-247; K-250; T-256; H-261; S-275; G-297; M-355; L-361; I-370; V-383; S-391 and K-404." evidence="13">
    <original>S</original>
    <variation>G</variation>
    <location>
        <position position="164"/>
    </location>
</feature>
<feature type="mutagenesis site" description="Strongly increases simvastatin synthase activity upon overexpression in E.coli and abolishes activity with LovD-bound alpha-methylbutanoate; when associated with N-4; V-9; E-26; S-28; L-35; R-43; R-96; C-109; P-123; V-157; G-164; F-174; L-178; G-191; I-192; M-241; S-247; K-250; T-256; H-261; S-275; G-297; V-383; M-355; L-361; I-370; S-391 and K-404." evidence="13">
    <original>S</original>
    <variation>N</variation>
    <location>
        <position position="172"/>
    </location>
</feature>
<feature type="mutagenesis site" description="Strongly increases simvastatin synthase activity upon overexpression in E.coli and abolishes activity with LovD-bound alpha-methylbutanoate; when associated with N-4; V-9; E-26; S-28; L-35; R-43; R-96; C-109; P-123; V-157; G-164; N-172; L-178; G-191; I-192; M-241; S-247; K-250; T-256; H-261; S-275; G-297; M-355; L-361; I-370; V-383; S-391 and K-404." evidence="13">
    <original>L</original>
    <variation>F</variation>
    <location>
        <position position="174"/>
    </location>
</feature>
<feature type="mutagenesis site" description="Strongly increases simvastatin synthase activity upon overexpression in E.coli and abolishes activity with LovD-bound alpha-methylbutanoate; when associated with N-4; V-9; E-26; S-28; L-35; R-43; R-96; C-109; P-123; V-157; G-164; N-172; F-174; G-191; I-192; M-241; S-247; K-250; T-256; H-261; S-275; G-297; M-355; L-361; I-370; V-383; S-391 and K-404." evidence="13">
    <original>A</original>
    <variation>L</variation>
    <location>
        <position position="178"/>
    </location>
</feature>
<feature type="mutagenesis site" description="Strongly increases simvastatin synthase activity upon overexpression in E.coli; when associated with G-12; E-26; A-40; N-60; V-86; Y-161; S-275 and F-334." evidence="7">
    <original>A</original>
    <variation>T</variation>
    <location>
        <position position="190"/>
    </location>
</feature>
<feature type="mutagenesis site" description="Strongly increases simvastatin synthase activity upon overexpression in E.coli and abolishes activity with LovD-bound alpha-methylbutanoate; when associated with N-4; V-9; E-26; S-28; L-35; R-43; R-96; C-109; P-123; V-157; G-164; N-172; F-174; L-178; I-192; M-241; S-247; K-250; T-256; H-261; S-275; G-297; M-355; L-361; I-370; V-383; S-391 and K-404." evidence="13">
    <original>N</original>
    <variation>G</variation>
    <location>
        <position position="191"/>
    </location>
</feature>
<feature type="mutagenesis site" description="Strongly increases simvastatin synthase activity upon overexpression in E.coli and abolishes activity with LovD-bound alpha-methylbutanoate; when associated with N-4; V-9; E-26; S-28; L-35; R-43; R-96; C-109; P-123; V-157; G-164; N-172; F-174; L-178; G-191; M-241; S-247; K-250; T-256; H-261; S-275; G-297; V-383; M-355; L-361; I-370; S-391 and K-404." evidence="13">
    <original>L</original>
    <variation>I</variation>
    <location>
        <position position="192"/>
    </location>
</feature>
<feature type="mutagenesis site" description="Strongly increases simvastatin synthase activity upon overexpression in E.coli and abolishes activity with LovD-bound alpha-methylbutanoate; when associated with N-4; V-9; E-26; S-28; L-35; R-43; R-96; C-109; P-123; V-157; G-164; N-172; F-174; L-178; G-191; I-192; S-247; K-250; T-256; H-261; S-275; G-297; M-355; L-361; I-370; V-383; S-391 and K-404." evidence="13">
    <original>Q</original>
    <variation>M</variation>
    <location>
        <position position="241"/>
    </location>
</feature>
<feature type="mutagenesis site" description="Strongly increases simvastatin synthase activity upon overexpression in E.coli and abolishes activity with LovD-bound alpha-methylbutanoate; when associated with N-4; V-9; E-26; S-28; L-35; R-43; R-96; C-109; P-123; V-157; G-164; N-172; F-174; L-178; G-191; I-192; M-241; K-250; T-256; H-261; S-275; G-297; M-355; L-361; I-370; V-383; S-391 and K-404." evidence="13">
    <original>A</original>
    <variation>S</variation>
    <location>
        <position position="247"/>
    </location>
</feature>
<feature type="mutagenesis site" description="Strongly increases simvastatin synthase activity upon overexpression in E.coli and abolishes activity with LovD-bound alpha-methylbutanoate; when associated with N-4; V-9; E-26; S-28; L-35; R-43; R-96; C-109; P-123; V-157; G-164; N-172; F-174; L-178; G-191; I-192; M-241; S-247; T-256; H-261; S-275; G-297; M-355; L-361; I-370; V-383; S-391 and K-404." evidence="13">
    <original>R</original>
    <variation>K</variation>
    <location>
        <position position="250"/>
    </location>
</feature>
<feature type="mutagenesis site" description="Strongly increases simvastatin synthase activity upon overexpression in E.coli and abolishes activity with LovD-bound alpha-methylbutanoate; when associated with N-4; V-9; E-26; S-28; L-35; R-43; R-96; C-109; P-123; V-157; G-164; N-172; F-174; L-178; G-191; I-192; M-241; S-247; K-250; H-261; S-275; G-297; M-355; L-361; I-370; V-383; S-391 and K-404." evidence="13">
    <original>S</original>
    <variation>T</variation>
    <location>
        <position position="256"/>
    </location>
</feature>
<feature type="mutagenesis site" description="Strongly increases simvastatin synthase activity upon overexpression in E.coli and abolishes activity with LovD-bound alpha-methylbutanoate; when associated with N-4; V-9; E-26; S-28; L-35; R-43; R-96; C-109; P-123; V-157; G-164; N-172; F-174; L-178; G-191; I-192; M-241; S-247; K-250; T-256; S-275; G-297; V-383; M-355; L-361; I-370; S-391 and K-404." evidence="13">
    <original>A</original>
    <variation>H</variation>
    <location>
        <position position="261"/>
    </location>
</feature>
<feature type="mutagenesis site" description="Strongly increases simvastatin synthase activity upon overexpression in E.coli and abolishes activity with LovD-bound alpha-methylbutanoate; when associated with N-4; V-9; E-26; S-28; L-35; R-43; R-96; C-109; P-123; V-157; G-164; N-172; F-174; L-178; G-191; I-192; M-241; S-247; K-250; T-256; H-261; G-297; M-355; L-361; I-370; V-383; S-391 and K-404." evidence="7 13">
    <original>G</original>
    <variation>S</variation>
    <location>
        <position position="275"/>
    </location>
</feature>
<feature type="mutagenesis site" description="Strongly increases simvastatin synthase activity upon overexpression in E.coli; when associated with G-12; E-26; A-40; N-60; V-86; Y-161; T-190 and F-334." evidence="7 13">
    <original>G</original>
    <variation>S</variation>
    <location>
        <position position="275"/>
    </location>
</feature>
<feature type="mutagenesis site" description="Strongly increases simvastatin synthase activity upon overexpression in E.coli and abolishes activity with LovD-bound alpha-methylbutanoate; when associated with N-4; V-9; E-26; S-28; L-35; R-43; R-96; C-109; P-123; V-157; G-164; N-172; F-174; L-178; G-191; I-192; M-241; S-247; K-250; T-256; H-261; S-275; M-355; L-361; I-370; V-383; S-391 and K-404." evidence="13">
    <original>Q</original>
    <variation>G</variation>
    <location>
        <position position="297"/>
    </location>
</feature>
<feature type="mutagenesis site" description="Strongly increases simvastatin synthase activity upon overexpression in E.coli; when associated with G-12; E-26; A-40; N-60; V-86; Y-161; T-190 and S-275." evidence="7">
    <original>V</original>
    <variation>F</variation>
    <location>
        <position position="334"/>
    </location>
</feature>
<feature type="mutagenesis site" description="Strongly increases simvastatin synthase activity upon overexpression in E.coli and abolishes activity with LovD-bound alpha-methylbutanoate; when associated with N-4; V-9; E-26; S-28; L-35; R-43; R-96; C-109; P-123; V-157; G-164; N-172; F-174; L-178; G-191; I-192; M-241; S-247; K-250; T-256; H-261; S-275; G-297; M-361; I-370; V-383; S-391 and K-404." evidence="13">
    <original>W</original>
    <variation>M</variation>
    <location>
        <position position="355"/>
    </location>
</feature>
<feature type="mutagenesis site" description="Strongly increases simvastatin synthase activity upon overexpression in E.coli and abolishes activity with LovD-bound alpha-methylbutanoate; when associated with N-4; V-9; E-26; S-28; L-35; R-43; R-96; C-109; P-123; V-157; G-164; N-172; F-174; L-178; G-191; I-192; M-241; S-247; K-250; T-256; H-261; S-275; V-383; G-297; M-355; I-370; S-391 and K-404." evidence="13">
    <original>L</original>
    <variation>M</variation>
    <location>
        <position position="361"/>
    </location>
</feature>
<feature type="mutagenesis site" description="Strongly increases simvastatin synthase activity upon overexpression in E.coli and abolishes activity with LovD-bound alpha-methylbutanoate; when associated with N-4; V-9; E-26; S-28; L-35; R-43; R-96; C-109; P-123; V-157; G-164; N-172; F-174; L-178; G-191; I-192; M-241; S-247; K-250; T-256; H-261; S-275; G-297; M-355; M-361; V-383; S-391 and K-404." evidence="13">
    <original>V</original>
    <variation>I</variation>
    <location>
        <position position="370"/>
    </location>
</feature>
<feature type="mutagenesis site" description="Strongly increases simvastatin synthase activity upon overexpression in E.coli and abolishes activity with LovD-bound alpha-methylbutanoate; when associated with N-4; V-9; E-26; S-28; L-35; R-43; R-96; C-109; P-123; V-157; G-164; N-172; F-174; L-178; G-191; I-192; M-241; S-247; K-250; T-256; H-261; S-275; G-297; M-355; L-361; I-370; S-391 and K-404." evidence="13">
    <original>A</original>
    <variation>V</variation>
    <location>
        <position position="383"/>
    </location>
</feature>
<feature type="mutagenesis site" description="Strongly increases simvastatin synthase activity upon overexpression in E.coli and abolishes activity with LovD-bound alpha-methylbutanoate; when associated with N-4; V-9; E-26; S-28; L-35; R-43; R-96; C-109; P-123; V-157; G-164; N-172; F-174; L-178; G-191; I-192; M-241; S-247; K-250; T-256; H-261; S-275; G-297; M-355; M-361; I-370; V-383 and K-404." evidence="13">
    <original>N</original>
    <variation>S</variation>
    <location>
        <position position="391"/>
    </location>
</feature>
<feature type="mutagenesis site" description="Strongly increases simvastatin synthase activity upon overexpression in E.coli and abolishes activity with LovD-bound alpha-methylbutanoate; when associated with N-4; V-9; E-26; S-28; L-35; R-43; R-96; C-109; P-123; V-157; G-164; N-172; F-174; L-178; G-191; I-192; M-241; S-247; K-250; T-256; H-261; S-275; V-383; G-297; M-355; M-361; I-370; V-383 and S-391." evidence="13">
    <original>H</original>
    <variation>K</variation>
    <location>
        <position position="404"/>
    </location>
</feature>
<feature type="helix" evidence="24">
    <location>
        <begin position="4"/>
        <end position="10"/>
    </location>
</feature>
<feature type="helix" evidence="24">
    <location>
        <begin position="13"/>
        <end position="26"/>
    </location>
</feature>
<feature type="strand" evidence="24">
    <location>
        <begin position="31"/>
        <end position="39"/>
    </location>
</feature>
<feature type="strand" evidence="24">
    <location>
        <begin position="45"/>
        <end position="53"/>
    </location>
</feature>
<feature type="helix" evidence="24">
    <location>
        <begin position="75"/>
        <end position="77"/>
    </location>
</feature>
<feature type="helix" evidence="24">
    <location>
        <begin position="78"/>
        <end position="91"/>
    </location>
</feature>
<feature type="helix" evidence="24">
    <location>
        <begin position="101"/>
        <end position="103"/>
    </location>
</feature>
<feature type="helix" evidence="24">
    <location>
        <begin position="106"/>
        <end position="109"/>
    </location>
</feature>
<feature type="strand" evidence="24">
    <location>
        <begin position="113"/>
        <end position="117"/>
    </location>
</feature>
<feature type="strand" evidence="24">
    <location>
        <begin position="123"/>
        <end position="126"/>
    </location>
</feature>
<feature type="helix" evidence="24">
    <location>
        <begin position="134"/>
        <end position="138"/>
    </location>
</feature>
<feature type="turn" evidence="24">
    <location>
        <begin position="147"/>
        <end position="149"/>
    </location>
</feature>
<feature type="helix" evidence="24">
    <location>
        <begin position="151"/>
        <end position="159"/>
    </location>
</feature>
<feature type="turn" evidence="22">
    <location>
        <begin position="160"/>
        <end position="164"/>
    </location>
</feature>
<feature type="strand" evidence="22">
    <location>
        <begin position="165"/>
        <end position="167"/>
    </location>
</feature>
<feature type="strand" evidence="22">
    <location>
        <begin position="173"/>
        <end position="176"/>
    </location>
</feature>
<feature type="strand" evidence="24">
    <location>
        <begin position="178"/>
        <end position="180"/>
    </location>
</feature>
<feature type="turn" evidence="23">
    <location>
        <begin position="182"/>
        <end position="184"/>
    </location>
</feature>
<feature type="helix" evidence="24">
    <location>
        <begin position="191"/>
        <end position="203"/>
    </location>
</feature>
<feature type="helix" evidence="24">
    <location>
        <begin position="207"/>
        <end position="214"/>
    </location>
</feature>
<feature type="helix" evidence="24">
    <location>
        <begin position="217"/>
        <end position="219"/>
    </location>
</feature>
<feature type="strand" evidence="21">
    <location>
        <begin position="223"/>
        <end position="226"/>
    </location>
</feature>
<feature type="helix" evidence="24">
    <location>
        <begin position="228"/>
        <end position="230"/>
    </location>
</feature>
<feature type="helix" evidence="24">
    <location>
        <begin position="232"/>
        <end position="237"/>
    </location>
</feature>
<feature type="strand" evidence="24">
    <location>
        <begin position="241"/>
        <end position="244"/>
    </location>
</feature>
<feature type="turn" evidence="24">
    <location>
        <begin position="246"/>
        <end position="248"/>
    </location>
</feature>
<feature type="strand" evidence="24">
    <location>
        <begin position="251"/>
        <end position="254"/>
    </location>
</feature>
<feature type="helix" evidence="24">
    <location>
        <begin position="257"/>
        <end position="259"/>
    </location>
</feature>
<feature type="turn" evidence="24">
    <location>
        <begin position="268"/>
        <end position="270"/>
    </location>
</feature>
<feature type="helix" evidence="24">
    <location>
        <begin position="276"/>
        <end position="288"/>
    </location>
</feature>
<feature type="strand" evidence="24">
    <location>
        <begin position="291"/>
        <end position="294"/>
    </location>
</feature>
<feature type="helix" evidence="24">
    <location>
        <begin position="296"/>
        <end position="302"/>
    </location>
</feature>
<feature type="helix" evidence="24">
    <location>
        <begin position="309"/>
        <end position="320"/>
    </location>
</feature>
<feature type="turn" evidence="24">
    <location>
        <begin position="323"/>
        <end position="325"/>
    </location>
</feature>
<feature type="turn" evidence="24">
    <location>
        <begin position="327"/>
        <end position="330"/>
    </location>
</feature>
<feature type="strand" evidence="24">
    <location>
        <begin position="337"/>
        <end position="339"/>
    </location>
</feature>
<feature type="strand" evidence="24">
    <location>
        <begin position="341"/>
        <end position="348"/>
    </location>
</feature>
<feature type="helix" evidence="24">
    <location>
        <begin position="352"/>
        <end position="354"/>
    </location>
</feature>
<feature type="strand" evidence="24">
    <location>
        <begin position="361"/>
        <end position="365"/>
    </location>
</feature>
<feature type="turn" evidence="24">
    <location>
        <begin position="366"/>
        <end position="368"/>
    </location>
</feature>
<feature type="strand" evidence="24">
    <location>
        <begin position="369"/>
        <end position="374"/>
    </location>
</feature>
<feature type="turn" evidence="24">
    <location>
        <begin position="375"/>
        <end position="378"/>
    </location>
</feature>
<feature type="strand" evidence="24">
    <location>
        <begin position="379"/>
        <end position="384"/>
    </location>
</feature>
<feature type="strand" evidence="24">
    <location>
        <begin position="387"/>
        <end position="391"/>
    </location>
</feature>
<feature type="helix" evidence="24">
    <location>
        <begin position="393"/>
        <end position="412"/>
    </location>
</feature>
<accession>Q9Y7D1</accession>
<gene>
    <name evidence="17" type="primary">lovD</name>
</gene>
<organism>
    <name type="scientific">Aspergillus terreus</name>
    <dbReference type="NCBI Taxonomy" id="33178"/>
    <lineage>
        <taxon>Eukaryota</taxon>
        <taxon>Fungi</taxon>
        <taxon>Dikarya</taxon>
        <taxon>Ascomycota</taxon>
        <taxon>Pezizomycotina</taxon>
        <taxon>Eurotiomycetes</taxon>
        <taxon>Eurotiomycetidae</taxon>
        <taxon>Eurotiales</taxon>
        <taxon>Aspergillaceae</taxon>
        <taxon>Aspergillus</taxon>
        <taxon>Aspergillus subgen. Circumdati</taxon>
    </lineage>
</organism>
<evidence type="ECO:0000269" key="1">
    <source>
    </source>
</evidence>
<evidence type="ECO:0000269" key="2">
    <source>
    </source>
</evidence>
<evidence type="ECO:0000269" key="3">
    <source>
    </source>
</evidence>
<evidence type="ECO:0000269" key="4">
    <source>
    </source>
</evidence>
<evidence type="ECO:0000269" key="5">
    <source>
    </source>
</evidence>
<evidence type="ECO:0000269" key="6">
    <source>
    </source>
</evidence>
<evidence type="ECO:0000269" key="7">
    <source>
    </source>
</evidence>
<evidence type="ECO:0000269" key="8">
    <source>
    </source>
</evidence>
<evidence type="ECO:0000269" key="9">
    <source>
    </source>
</evidence>
<evidence type="ECO:0000269" key="10">
    <source>
    </source>
</evidence>
<evidence type="ECO:0000269" key="11">
    <source>
    </source>
</evidence>
<evidence type="ECO:0000269" key="12">
    <source>
    </source>
</evidence>
<evidence type="ECO:0000269" key="13">
    <source>
    </source>
</evidence>
<evidence type="ECO:0000269" key="14">
    <source>
    </source>
</evidence>
<evidence type="ECO:0000269" key="15">
    <source>
    </source>
</evidence>
<evidence type="ECO:0000269" key="16">
    <source>
    </source>
</evidence>
<evidence type="ECO:0000303" key="17">
    <source>
    </source>
</evidence>
<evidence type="ECO:0000303" key="18">
    <source>
    </source>
</evidence>
<evidence type="ECO:0000305" key="19"/>
<evidence type="ECO:0000305" key="20">
    <source>
    </source>
</evidence>
<evidence type="ECO:0007829" key="21">
    <source>
        <dbReference type="PDB" id="3HLC"/>
    </source>
</evidence>
<evidence type="ECO:0007829" key="22">
    <source>
        <dbReference type="PDB" id="3HLD"/>
    </source>
</evidence>
<evidence type="ECO:0007829" key="23">
    <source>
        <dbReference type="PDB" id="3HLG"/>
    </source>
</evidence>
<evidence type="ECO:0007829" key="24">
    <source>
        <dbReference type="PDB" id="4LCL"/>
    </source>
</evidence>
<sequence>MGSIIDAAAAADPVVLMETAFRKAVKSRQIPGAVIMARDCSGNLNYTRCFGARTVRRDECNQLPPLQVDTPCRLASATKLLTTIMALQCMERGLVDLDETVDRLLPDLSAMPVLEGFDDAGNARLRERRGKITLRHLLTHTSGLSYVFLHPLLREYMAQGHLQSAEKFGIQSRLAPPAVNDPGAEWIYGANLDWAGKLVERATGLDLEQYLQENICAPLGITDMTFKLQQRPDMLARRADQTHRNSADGRLRYDDSVYFRADGEECFGGQGVFSGPGSYMKVLHSLLKRDGLLLQPQTVDLMFQPALEPRLEEQMNQHMDASPHINYGGPMPMVLRRSFGLGGIIALEDLDGENWRRKGSLTFGGGPNIVWQIDPKAGLCTLAFFQLEPWNDPVCRDLTRTFEHAIYAQYQQG</sequence>
<reference key="1">
    <citation type="journal article" date="1999" name="Science">
        <title>Modulation of polyketide synthase activity by accessory proteins during lovastatin biosynthesis.</title>
        <authorList>
            <person name="Kennedy J."/>
            <person name="Auclair K."/>
            <person name="Kendrew S.G."/>
            <person name="Park C."/>
            <person name="Vederas J.C."/>
            <person name="Hutchinson C.R."/>
        </authorList>
    </citation>
    <scope>NUCLEOTIDE SEQUENCE [GENOMIC DNA]</scope>
    <scope>FUNCTION</scope>
    <scope>PATHWAY</scope>
    <scope>DISRUPTION PHENOTYPE</scope>
    <scope>SUBUNIT</scope>
    <source>
        <strain>ATCC 20542 / MF4845</strain>
    </source>
</reference>
<reference key="2">
    <citation type="journal article" date="1980" name="Proc. Natl. Acad. Sci. U.S.A.">
        <title>Mevinolin: a highly potent competitive inhibitor of hydroxymethylglutaryl-coenzyme A reductase and a cholesterol-lowering agent.</title>
        <authorList>
            <person name="Alberts A.W."/>
            <person name="Chen J."/>
            <person name="Kuron G."/>
            <person name="Hunt V."/>
            <person name="Huff J."/>
            <person name="Hoffman C."/>
            <person name="Rothrock J."/>
            <person name="Lopez M."/>
            <person name="Joshua H."/>
            <person name="Harris E."/>
            <person name="Patchett A."/>
            <person name="Monaghan R."/>
            <person name="Currie S."/>
            <person name="Stapley E."/>
            <person name="Albers-Schonberg G."/>
            <person name="Hensens O."/>
            <person name="Hirshfield J."/>
            <person name="Hoogsteen K."/>
            <person name="Liesch J."/>
            <person name="Springer J."/>
        </authorList>
    </citation>
    <scope>BIOTECHNOLOGY</scope>
</reference>
<reference key="3">
    <citation type="journal article" date="1999" name="Chem. Biol.">
        <title>Lovastatin biosynthesis in Aspergillus terreus: characterization of blocked mutants, enzyme activities and a multifunctional polyketide synthase gene.</title>
        <authorList>
            <person name="Hendrickson L."/>
            <person name="Davis C.R."/>
            <person name="Roach C."/>
            <person name="Nguyen D.K."/>
            <person name="Aldrich T."/>
            <person name="McAda P.C."/>
            <person name="Reeves C.D."/>
        </authorList>
    </citation>
    <scope>FUNCTION</scope>
    <source>
        <strain>ATCC 20542 / MF4845</strain>
        <tissue evidence="2">Mycelium</tissue>
    </source>
</reference>
<reference key="4">
    <citation type="journal article" date="2003" name="Org. Biomol. Chem.">
        <title>Transformations of cyclic nonaketides by Aspergillus terreus mutants blocked for lovastatin biosynthesis at the lovA and lovC genes.</title>
        <authorList>
            <person name="Sorensen J.L."/>
            <person name="Auclair K."/>
            <person name="Kennedy J."/>
            <person name="Hutchinson C.R."/>
            <person name="Vederas J.C."/>
        </authorList>
    </citation>
    <scope>FUNCTION</scope>
</reference>
<reference key="5">
    <citation type="journal article" date="2006" name="Chem. Biol.">
        <title>Biosynthesis of lovastatin analogs with a broadly specific acyltransferase.</title>
        <authorList>
            <person name="Xie X."/>
            <person name="Watanabe K."/>
            <person name="Wojcicki W.A."/>
            <person name="Wang C.C."/>
            <person name="Tang Y."/>
        </authorList>
    </citation>
    <scope>FUNCTION</scope>
    <scope>MUTAGENESIS OF SER-76</scope>
    <scope>ACTIVE SITE</scope>
    <scope>BIOTECHNOLOGY</scope>
</reference>
<reference key="6">
    <citation type="journal article" date="2009" name="Biotechnol. Bioeng.">
        <title>Rational improvement of simvastatin synthase solubility in Escherichia coli leads to higher whole-cell biocatalytic activity.</title>
        <authorList>
            <person name="Xie X."/>
            <person name="Pashkov I."/>
            <person name="Gao X."/>
            <person name="Guerrero J.L."/>
            <person name="Yeates T.O."/>
            <person name="Tang Y."/>
        </authorList>
    </citation>
    <scope>FUNCTION</scope>
    <scope>CATALYTIC ACTIVITY</scope>
    <scope>BIOTECHNOLOGY</scope>
    <scope>BIOPHYSICOCHEMICAL PROPERTIES</scope>
    <scope>MUTAGENESIS OF CYS-40 AND CYS-60</scope>
</reference>
<reference key="7">
    <citation type="journal article" date="2009" name="J. Am. Chem. Soc.">
        <title>Acyltransferase mediated polyketide release from a fungal megasynthase.</title>
        <authorList>
            <person name="Xie X."/>
            <person name="Meehan M.J."/>
            <person name="Xu W."/>
            <person name="Dorrestein P.C."/>
            <person name="Tang Y."/>
        </authorList>
    </citation>
    <scope>FUNCTION</scope>
    <scope>CATALYTIC ACTIVITY</scope>
    <scope>INTERACTION WITH LOVF</scope>
</reference>
<reference key="8">
    <citation type="journal article" date="2009" name="Science">
        <title>Complete reconstitution of a highly reducing iterative polyketide synthase.</title>
        <authorList>
            <person name="Ma S.M."/>
            <person name="Li J.W."/>
            <person name="Choi J.W."/>
            <person name="Zhou H."/>
            <person name="Lee K.K."/>
            <person name="Moorthie V.A."/>
            <person name="Xie X."/>
            <person name="Kealey J.T."/>
            <person name="Da Silva N.A."/>
            <person name="Vederas J.C."/>
            <person name="Tang Y."/>
        </authorList>
    </citation>
    <scope>FUNCTION</scope>
</reference>
<reference key="9">
    <citation type="journal article" date="2011" name="Biochemistry">
        <title>FT-ICR-MS characterization of intermediates in the biosynthesis of the alpha-methylbutyrate side chain of lovastatin by the 277 kDa polyketide synthase LovF.</title>
        <authorList>
            <person name="Meehan M.J."/>
            <person name="Xie X."/>
            <person name="Zhao X."/>
            <person name="Xu W."/>
            <person name="Tang Y."/>
            <person name="Dorrestein P.C."/>
        </authorList>
    </citation>
    <scope>FUNCTION</scope>
</reference>
<reference key="10">
    <citation type="journal article" date="2011" name="J. Am. Chem. Soc.">
        <title>Double oxidation of the cyclic nonaketide dihydromonacolin L to monacolin J by a single cytochrome P450 monooxygenase, LovA.</title>
        <authorList>
            <person name="Barriuso J."/>
            <person name="Nguyen D.T."/>
            <person name="Li J.W."/>
            <person name="Roberts J.N."/>
            <person name="MacNevin G."/>
            <person name="Chaytor J.L."/>
            <person name="Marcus S.L."/>
            <person name="Vederas J.C."/>
            <person name="Ro D.K."/>
        </authorList>
    </citation>
    <scope>FUNCTION</scope>
</reference>
<reference key="11">
    <citation type="journal article" date="2012" name="Proc. Natl. Acad. Sci. U.S.A.">
        <title>Crystal structure and biochemical studies of the trans-acting polyketide enoyl reductase LovC from lovastatin biosynthesis.</title>
        <authorList>
            <person name="Ames B.D."/>
            <person name="Nguyen C."/>
            <person name="Bruegger J."/>
            <person name="Smith P."/>
            <person name="Xu W."/>
            <person name="Ma S."/>
            <person name="Wong E."/>
            <person name="Wong S."/>
            <person name="Xie X."/>
            <person name="Li J.W."/>
            <person name="Vederas J.C."/>
            <person name="Tang Y."/>
            <person name="Tsai S.C."/>
        </authorList>
    </citation>
    <scope>FUNCTION</scope>
</reference>
<reference key="12">
    <citation type="journal article" date="2013" name="Angew. Chem. Int. Ed. Engl.">
        <title>LovG: the thioesterase required for dihydromonacolin L release and lovastatin nonaketide synthase turnover in lovastatin biosynthesis.</title>
        <authorList>
            <person name="Xu W."/>
            <person name="Chooi Y.H."/>
            <person name="Choi J.W."/>
            <person name="Li S."/>
            <person name="Vederas J.C."/>
            <person name="Da Silva N.A."/>
            <person name="Tang Y."/>
        </authorList>
    </citation>
    <scope>FUNCTION</scope>
</reference>
<reference key="13">
    <citation type="journal article" date="2017" name="Int. J. Mol. Sci.">
        <title>Simvastatin inhibits cell proliferation and migration in human anaplastic thyroid cancer.</title>
        <authorList>
            <person name="Chen M.C."/>
            <person name="Tsai Y.C."/>
            <person name="Tseng J.H."/>
            <person name="Liou J.J."/>
            <person name="Horng S."/>
            <person name="Wen H.C."/>
            <person name="Fan Y.C."/>
            <person name="Zhong W.B."/>
            <person name="Hsu S.P."/>
        </authorList>
    </citation>
    <scope>BIOTECHNOLOGY</scope>
</reference>
<reference key="14">
    <citation type="journal article" date="2018" name="Int. J. Mol. Sci.">
        <title>A synergistic anti-cancer effect of troglitazone and lovastatin in a human anaplastic thyroid cancer cell line and in a mouse xenograft model.</title>
        <authorList>
            <person name="Zhong W.B."/>
            <person name="Tsai Y.C."/>
            <person name="Chin L.H."/>
            <person name="Tseng J.H."/>
            <person name="Tang L.W."/>
            <person name="Horng S."/>
            <person name="Fan Y.C."/>
            <person name="Hsu S.P."/>
        </authorList>
    </citation>
    <scope>BIOTECHNOLOGY</scope>
</reference>
<reference key="15">
    <citation type="journal article" date="2009" name="Chem. Biol.">
        <title>Directed evolution and structural characterization of a simvastatin synthase.</title>
        <authorList>
            <person name="Gao X."/>
            <person name="Xie X."/>
            <person name="Pashkov I."/>
            <person name="Sawaya M.R."/>
            <person name="Laidman J."/>
            <person name="Zhang W."/>
            <person name="Cacho R."/>
            <person name="Yeates T.O."/>
            <person name="Tang Y."/>
        </authorList>
    </citation>
    <scope>X-RAY CRYSTALLOGRAPHY (2.00 ANGSTROMS) IN COMPLEXES WITH MONACOLIN J; LOVASTATIN AND SIMVASTATIN</scope>
    <scope>FUNCTION</scope>
    <scope>CATALYTIC ACTIVITY</scope>
    <scope>ACTIVE SITE</scope>
    <scope>MUTAGENESIS OF ASP-12; LYS-26; ALA-86; HIS-161; ALA-190; GLY-275 AND VAL-334</scope>
    <scope>BIOPHYSICOCHEMICAL PROPERTIES</scope>
</reference>
<reference key="16">
    <citation type="journal article" date="2014" name="Nat. Chem. Biol.">
        <title>The role of distant mutations and allosteric regulation on LovD active site dynamics.</title>
        <authorList>
            <person name="Jimenez-Oses G."/>
            <person name="Osuna S."/>
            <person name="Gao X."/>
            <person name="Sawaya M.R."/>
            <person name="Gilson L."/>
            <person name="Collier S.J."/>
            <person name="Huisman G.W."/>
            <person name="Yeates T.O."/>
            <person name="Tang Y."/>
            <person name="Houk K.N."/>
        </authorList>
    </citation>
    <scope>X-RAY CRYSTALLOGRAPHY (1.80 ANGSTROMS)</scope>
    <scope>FUNCTION</scope>
    <scope>PATHWAY</scope>
    <scope>MUTAGENESIS OF ILE-4; ALA-9; LYS-26; ARG-28; ILE-35; ASN-43; ASP-96; SER-109; ALA-123; MET-157; SER-164; SER-172; LEU-174; ALA-178; ASN-191; LEU-192; GLN-241; ALA-247; ARG-250; SER-256; ALA-261; GLY-275; GLN-297; TRP-355; LEU-361; VAL-370; ALA-383; ASN-391 AND HIS-404</scope>
</reference>
<comment type="function">
    <text evidence="1 2 3 4 5 6 7 8 9 10 11 12 13">Monacolin J acid methylbutanoyltransferase; part of the gene cluster that mediates the biosynthesis of lovastatin (also known as mevinolin, mevacor or monacolin K), a hypolipidemic inhibitor of (3S)-hydroxymethylglutaryl-coenzyme A (HMG-CoA) reductase (HMGR) (PubMed:10334994, PubMed:12929390, PubMed:21495633). The first step in the biosynthesis of lovastatin is the production of dihydromonacolin L acid by the lovastatin nonaketide synthase lovB and the trans-acting enoyl reductase lovC via condensation of one acetyl-CoA unit and 8 malonyl-CoA units (PubMed:10334994, PubMed:10381407, PubMed:19900898, PubMed:22733743). Dihydromonacolin L acid is released from lovB by the thioesterase lovG (PubMed:23653178). Next, dihydromonacolin L acid is oxidized by the dihydromonacolin L monooxygenase lovA twice to form monacolin J acid (PubMed:12929390, PubMed:21495633). The 2-methylbutyrate moiety of lovastatin is synthesized by the lovastatin diketide synthase lovF via condensation of one acetyl-CoA unit and one malonyl-CoA unit (PubMed:19530726, PubMed:21069965). Finally, the covalent attachment of this moiety to monacolin J acid is catalyzed by the transesterase lovD to yield lovastatin (PubMed:10334994, PubMed:17113998, PubMed:18988191, PubMed:19875080, PubMed:24727900). LovD has broad substrate specificity and can also convert monacolin J to simvastatin using alpha-dimethylbutanoyl-S-methyl-3-mercaptopropionate (DMB-S-MMP) as the thioester acyl donor, and can also catalyze the reverse reaction and function as hydrolase in vitro (PubMed:19875080). LovD has much higher activity with LovF-bound 2-methylbutanoate than with free diketide substrates (PubMed:21069965).</text>
</comment>
<comment type="catalytic activity">
    <reaction evidence="5 6 7">
        <text>monacolin J carboxylate + (S)-2-methylbutanoyl-[2-methylbutanoate polyketide synthase] = lovastatin carboxylate + holo-[2-methylbutanoate polyketide synthase]</text>
        <dbReference type="Rhea" id="RHEA:43064"/>
        <dbReference type="Rhea" id="RHEA-COMP:10260"/>
        <dbReference type="Rhea" id="RHEA-COMP:10261"/>
        <dbReference type="ChEBI" id="CHEBI:64479"/>
        <dbReference type="ChEBI" id="CHEBI:79035"/>
        <dbReference type="ChEBI" id="CHEBI:79038"/>
        <dbReference type="ChEBI" id="CHEBI:82764"/>
        <dbReference type="EC" id="2.3.1.238"/>
    </reaction>
</comment>
<comment type="biophysicochemical properties">
    <kinetics>
        <KM evidence="5 7">0.78 mM for monacolin J</KM>
        <KM evidence="5 7">0.67 mM for alpha-dimethylbutanoyl-S-methyl-3-mercaptopropionate</KM>
        <text>kcat is 0.62 min(-1) for simvastatin synthesis.</text>
    </kinetics>
</comment>
<comment type="pathway">
    <text evidence="1 13">Polyketide biosynthesis; lovastatin biosynthesis.</text>
</comment>
<comment type="subunit">
    <text evidence="1 6">Interacts with LovF.</text>
</comment>
<comment type="disruption phenotype">
    <text evidence="1">Loss of lovastatin biosynthesis.</text>
</comment>
<comment type="biotechnology">
    <text evidence="14 15 16">Lovastatin acts as a hypolipidemic agent that works as inhibitor of (3S)-hydroxymethylglutaryl-coenzyme A (HMG-CoA) reductase (HMGR) which reduces HMG-CoA to mevalonate and is the key step in cholesterol biosynthesis (PubMed:6933445). Lovastatin, simvastatin and related compounds are widely used to treat hypercholesteremia and reduce the risk of cardiovascular disease (PubMed:6933445). Furthermore, statins such as lovastatin were found to be anticancer agents (PubMed:29236027, PubMed:29932104).</text>
</comment>
<comment type="miscellaneous">
    <text evidence="20">Directed evolution toward higher catalytic activity with free diketides led to an enzyme with 1000-fold higher activity in simvastatin synthesis, due to numerous mutations that affect protein folding and promote optimal alignment of the residues that are important for substrate binding and catalysis.</text>
</comment>
<comment type="similarity">
    <text evidence="19">Belongs to the class-A beta-lactamase family.</text>
</comment>
<keyword id="KW-0002">3D-structure</keyword>
<keyword id="KW-0012">Acyltransferase</keyword>
<keyword id="KW-0378">Hydrolase</keyword>
<keyword id="KW-0808">Transferase</keyword>
<dbReference type="EC" id="2.3.1.238" evidence="5 6 7"/>
<dbReference type="EMBL" id="AH007774">
    <property type="protein sequence ID" value="AAD34555.1"/>
    <property type="molecule type" value="Genomic_DNA"/>
</dbReference>
<dbReference type="PDB" id="3HL9">
    <property type="method" value="X-ray"/>
    <property type="resolution" value="3.40 A"/>
    <property type="chains" value="A/B/C/D=1-413"/>
</dbReference>
<dbReference type="PDB" id="3HLB">
    <property type="method" value="X-ray"/>
    <property type="resolution" value="2.50 A"/>
    <property type="chains" value="A/B/C/D=1-413"/>
</dbReference>
<dbReference type="PDB" id="3HLC">
    <property type="method" value="X-ray"/>
    <property type="resolution" value="2.00 A"/>
    <property type="chains" value="A=1-413"/>
</dbReference>
<dbReference type="PDB" id="3HLD">
    <property type="method" value="X-ray"/>
    <property type="resolution" value="2.00 A"/>
    <property type="chains" value="A=1-413"/>
</dbReference>
<dbReference type="PDB" id="3HLE">
    <property type="method" value="X-ray"/>
    <property type="resolution" value="2.06 A"/>
    <property type="chains" value="A=1-413"/>
</dbReference>
<dbReference type="PDB" id="3HLF">
    <property type="method" value="X-ray"/>
    <property type="resolution" value="2.00 A"/>
    <property type="chains" value="A=1-413"/>
</dbReference>
<dbReference type="PDB" id="3HLG">
    <property type="method" value="X-ray"/>
    <property type="resolution" value="2.01 A"/>
    <property type="chains" value="A=1-413"/>
</dbReference>
<dbReference type="PDB" id="4LCL">
    <property type="method" value="X-ray"/>
    <property type="resolution" value="1.80 A"/>
    <property type="chains" value="A/B=1-413"/>
</dbReference>
<dbReference type="PDB" id="4LCM">
    <property type="method" value="X-ray"/>
    <property type="resolution" value="3.19 A"/>
    <property type="chains" value="A/B/C/D=1-413"/>
</dbReference>
<dbReference type="PDBsum" id="3HL9"/>
<dbReference type="PDBsum" id="3HLB"/>
<dbReference type="PDBsum" id="3HLC"/>
<dbReference type="PDBsum" id="3HLD"/>
<dbReference type="PDBsum" id="3HLE"/>
<dbReference type="PDBsum" id="3HLF"/>
<dbReference type="PDBsum" id="3HLG"/>
<dbReference type="PDBsum" id="4LCL"/>
<dbReference type="PDBsum" id="4LCM"/>
<dbReference type="SMR" id="Q9Y7D1"/>
<dbReference type="KEGG" id="ag:AAD34555"/>
<dbReference type="VEuPathDB" id="FungiDB:ATEG_09964"/>
<dbReference type="BioCyc" id="MetaCyc:MONOMER-18785"/>
<dbReference type="BRENDA" id="2.3.1.238">
    <property type="organism ID" value="536"/>
</dbReference>
<dbReference type="UniPathway" id="UPA00875"/>
<dbReference type="EvolutionaryTrace" id="Q9Y7D1"/>
<dbReference type="GO" id="GO:0016746">
    <property type="term" value="F:acyltransferase activity"/>
    <property type="evidence" value="ECO:0000314"/>
    <property type="project" value="UniProtKB"/>
</dbReference>
<dbReference type="GO" id="GO:0016787">
    <property type="term" value="F:hydrolase activity"/>
    <property type="evidence" value="ECO:0007669"/>
    <property type="project" value="UniProtKB-KW"/>
</dbReference>
<dbReference type="GO" id="GO:0016218">
    <property type="term" value="F:polyketide synthase activity"/>
    <property type="evidence" value="ECO:0000314"/>
    <property type="project" value="UniProt"/>
</dbReference>
<dbReference type="GO" id="GO:0017000">
    <property type="term" value="P:antibiotic biosynthetic process"/>
    <property type="evidence" value="ECO:0000314"/>
    <property type="project" value="UniProtKB"/>
</dbReference>
<dbReference type="GO" id="GO:0050832">
    <property type="term" value="P:defense response to fungus"/>
    <property type="evidence" value="ECO:0000314"/>
    <property type="project" value="UniProtKB"/>
</dbReference>
<dbReference type="GO" id="GO:0140735">
    <property type="term" value="P:lovastatin biosynthetic process"/>
    <property type="evidence" value="ECO:0000314"/>
    <property type="project" value="GO_Central"/>
</dbReference>
<dbReference type="GO" id="GO:0030639">
    <property type="term" value="P:polyketide biosynthetic process"/>
    <property type="evidence" value="ECO:0000314"/>
    <property type="project" value="UniProtKB"/>
</dbReference>
<dbReference type="Gene3D" id="3.40.710.10">
    <property type="entry name" value="DD-peptidase/beta-lactamase superfamily"/>
    <property type="match status" value="1"/>
</dbReference>
<dbReference type="InterPro" id="IPR001466">
    <property type="entry name" value="Beta-lactam-related"/>
</dbReference>
<dbReference type="InterPro" id="IPR012338">
    <property type="entry name" value="Beta-lactam/transpept-like"/>
</dbReference>
<dbReference type="InterPro" id="IPR050789">
    <property type="entry name" value="Diverse_Enzym_Activities"/>
</dbReference>
<dbReference type="PANTHER" id="PTHR43283:SF17">
    <property type="entry name" value="(LOVD), PUTATIVE (AFU_ORTHOLOGUE AFUA_5G00920)-RELATED"/>
    <property type="match status" value="1"/>
</dbReference>
<dbReference type="PANTHER" id="PTHR43283">
    <property type="entry name" value="BETA-LACTAMASE-RELATED"/>
    <property type="match status" value="1"/>
</dbReference>
<dbReference type="Pfam" id="PF00144">
    <property type="entry name" value="Beta-lactamase"/>
    <property type="match status" value="1"/>
</dbReference>
<dbReference type="SUPFAM" id="SSF56601">
    <property type="entry name" value="beta-lactamase/transpeptidase-like"/>
    <property type="match status" value="1"/>
</dbReference>
<proteinExistence type="evidence at protein level"/>